<reference key="1">
    <citation type="journal article" date="2006" name="Nature">
        <title>The DNA sequence, annotation and analysis of human chromosome 3.</title>
        <authorList>
            <person name="Muzny D.M."/>
            <person name="Scherer S.E."/>
            <person name="Kaul R."/>
            <person name="Wang J."/>
            <person name="Yu J."/>
            <person name="Sudbrak R."/>
            <person name="Buhay C.J."/>
            <person name="Chen R."/>
            <person name="Cree A."/>
            <person name="Ding Y."/>
            <person name="Dugan-Rocha S."/>
            <person name="Gill R."/>
            <person name="Gunaratne P."/>
            <person name="Harris R.A."/>
            <person name="Hawes A.C."/>
            <person name="Hernandez J."/>
            <person name="Hodgson A.V."/>
            <person name="Hume J."/>
            <person name="Jackson A."/>
            <person name="Khan Z.M."/>
            <person name="Kovar-Smith C."/>
            <person name="Lewis L.R."/>
            <person name="Lozado R.J."/>
            <person name="Metzker M.L."/>
            <person name="Milosavljevic A."/>
            <person name="Miner G.R."/>
            <person name="Morgan M.B."/>
            <person name="Nazareth L.V."/>
            <person name="Scott G."/>
            <person name="Sodergren E."/>
            <person name="Song X.-Z."/>
            <person name="Steffen D."/>
            <person name="Wei S."/>
            <person name="Wheeler D.A."/>
            <person name="Wright M.W."/>
            <person name="Worley K.C."/>
            <person name="Yuan Y."/>
            <person name="Zhang Z."/>
            <person name="Adams C.Q."/>
            <person name="Ansari-Lari M.A."/>
            <person name="Ayele M."/>
            <person name="Brown M.J."/>
            <person name="Chen G."/>
            <person name="Chen Z."/>
            <person name="Clendenning J."/>
            <person name="Clerc-Blankenburg K.P."/>
            <person name="Chen R."/>
            <person name="Chen Z."/>
            <person name="Davis C."/>
            <person name="Delgado O."/>
            <person name="Dinh H.H."/>
            <person name="Dong W."/>
            <person name="Draper H."/>
            <person name="Ernst S."/>
            <person name="Fu G."/>
            <person name="Gonzalez-Garay M.L."/>
            <person name="Garcia D.K."/>
            <person name="Gillett W."/>
            <person name="Gu J."/>
            <person name="Hao B."/>
            <person name="Haugen E."/>
            <person name="Havlak P."/>
            <person name="He X."/>
            <person name="Hennig S."/>
            <person name="Hu S."/>
            <person name="Huang W."/>
            <person name="Jackson L.R."/>
            <person name="Jacob L.S."/>
            <person name="Kelly S.H."/>
            <person name="Kube M."/>
            <person name="Levy R."/>
            <person name="Li Z."/>
            <person name="Liu B."/>
            <person name="Liu J."/>
            <person name="Liu W."/>
            <person name="Lu J."/>
            <person name="Maheshwari M."/>
            <person name="Nguyen B.-V."/>
            <person name="Okwuonu G.O."/>
            <person name="Palmeiri A."/>
            <person name="Pasternak S."/>
            <person name="Perez L.M."/>
            <person name="Phelps K.A."/>
            <person name="Plopper F.J."/>
            <person name="Qiang B."/>
            <person name="Raymond C."/>
            <person name="Rodriguez R."/>
            <person name="Saenphimmachak C."/>
            <person name="Santibanez J."/>
            <person name="Shen H."/>
            <person name="Shen Y."/>
            <person name="Subramanian S."/>
            <person name="Tabor P.E."/>
            <person name="Verduzco D."/>
            <person name="Waldron L."/>
            <person name="Wang J."/>
            <person name="Wang J."/>
            <person name="Wang Q."/>
            <person name="Williams G.A."/>
            <person name="Wong G.K.-S."/>
            <person name="Yao Z."/>
            <person name="Zhang J."/>
            <person name="Zhang X."/>
            <person name="Zhao G."/>
            <person name="Zhou J."/>
            <person name="Zhou Y."/>
            <person name="Nelson D."/>
            <person name="Lehrach H."/>
            <person name="Reinhardt R."/>
            <person name="Naylor S.L."/>
            <person name="Yang H."/>
            <person name="Olson M."/>
            <person name="Weinstock G."/>
            <person name="Gibbs R.A."/>
        </authorList>
    </citation>
    <scope>NUCLEOTIDE SEQUENCE [LARGE SCALE GENOMIC DNA]</scope>
</reference>
<reference key="2">
    <citation type="journal article" date="2004" name="Genome Res.">
        <title>The status, quality, and expansion of the NIH full-length cDNA project: the Mammalian Gene Collection (MGC).</title>
        <authorList>
            <consortium name="The MGC Project Team"/>
        </authorList>
    </citation>
    <scope>NUCLEOTIDE SEQUENCE [LARGE SCALE MRNA]</scope>
    <source>
        <tissue>Kidney</tissue>
        <tissue>Lymph</tissue>
    </source>
</reference>
<keyword id="KW-1185">Reference proteome</keyword>
<organism>
    <name type="scientific">Homo sapiens</name>
    <name type="common">Human</name>
    <dbReference type="NCBI Taxonomy" id="9606"/>
    <lineage>
        <taxon>Eukaryota</taxon>
        <taxon>Metazoa</taxon>
        <taxon>Chordata</taxon>
        <taxon>Craniata</taxon>
        <taxon>Vertebrata</taxon>
        <taxon>Euteleostomi</taxon>
        <taxon>Mammalia</taxon>
        <taxon>Eutheria</taxon>
        <taxon>Euarchontoglires</taxon>
        <taxon>Primates</taxon>
        <taxon>Haplorrhini</taxon>
        <taxon>Catarrhini</taxon>
        <taxon>Hominidae</taxon>
        <taxon>Homo</taxon>
    </lineage>
</organism>
<protein>
    <recommendedName>
        <fullName evidence="2">Putative protein FAM86JP</fullName>
    </recommendedName>
</protein>
<name>F86JP_HUMAN</name>
<proteinExistence type="uncertain"/>
<dbReference type="EMBL" id="AC092903">
    <property type="status" value="NOT_ANNOTATED_CDS"/>
    <property type="molecule type" value="Genomic_DNA"/>
</dbReference>
<dbReference type="EMBL" id="BC032772">
    <property type="status" value="NOT_ANNOTATED_CDS"/>
    <property type="molecule type" value="mRNA"/>
</dbReference>
<dbReference type="EMBL" id="BC041080">
    <property type="status" value="NOT_ANNOTATED_CDS"/>
    <property type="molecule type" value="mRNA"/>
</dbReference>
<dbReference type="IntAct" id="Q05BU3">
    <property type="interactions" value="1"/>
</dbReference>
<dbReference type="GlyGen" id="Q05BU3">
    <property type="glycosylation" value="1 site, 1 N-linked glycan (1 site)"/>
</dbReference>
<dbReference type="BioMuta" id="HGNC:44097"/>
<dbReference type="AGR" id="HGNC:44097"/>
<dbReference type="GeneCards" id="FAM86JP"/>
<dbReference type="HGNC" id="HGNC:44097">
    <property type="gene designation" value="FAM86JP"/>
</dbReference>
<dbReference type="neXtProt" id="NX_Q05BU3"/>
<dbReference type="InParanoid" id="Q05BU3"/>
<dbReference type="PAN-GO" id="Q05BU3">
    <property type="GO annotations" value="0 GO annotations based on evolutionary models"/>
</dbReference>
<dbReference type="PathwayCommons" id="Q05BU3"/>
<dbReference type="SignaLink" id="Q05BU3"/>
<dbReference type="Pharos" id="Q05BU3">
    <property type="development level" value="Tdark"/>
</dbReference>
<dbReference type="Proteomes" id="UP000005640">
    <property type="component" value="Unplaced"/>
</dbReference>
<feature type="chain" id="PRO_0000326085" description="Putative protein FAM86JP">
    <location>
        <begin position="1"/>
        <end position="40"/>
    </location>
</feature>
<feature type="region of interest" description="Disordered" evidence="1">
    <location>
        <begin position="1"/>
        <end position="40"/>
    </location>
</feature>
<feature type="compositionally biased region" description="Basic residues" evidence="1">
    <location>
        <begin position="10"/>
        <end position="23"/>
    </location>
</feature>
<evidence type="ECO:0000256" key="1">
    <source>
        <dbReference type="SAM" id="MobiDB-lite"/>
    </source>
</evidence>
<evidence type="ECO:0000305" key="2"/>
<evidence type="ECO:0000312" key="3">
    <source>
        <dbReference type="HGNC" id="HGNC:44097"/>
    </source>
</evidence>
<comment type="caution">
    <text evidence="2">Could be the product of a pseudogene.</text>
</comment>
<accession>Q05BU3</accession>
<accession>Q8IW37</accession>
<sequence>MPGAFSQNSSKRRAVLPRSHRVAGRGPAEAGCLPGAPAGS</sequence>
<gene>
    <name evidence="3" type="primary">FAM86JP</name>
</gene>